<dbReference type="EMBL" id="CP001127">
    <property type="protein sequence ID" value="ACF92339.1"/>
    <property type="molecule type" value="Genomic_DNA"/>
</dbReference>
<dbReference type="RefSeq" id="WP_000787073.1">
    <property type="nucleotide sequence ID" value="NC_011094.1"/>
</dbReference>
<dbReference type="SMR" id="B4TWR7"/>
<dbReference type="KEGG" id="sew:SeSA_A0082"/>
<dbReference type="HOGENOM" id="CLU_010118_6_0_6"/>
<dbReference type="UniPathway" id="UPA00117"/>
<dbReference type="Proteomes" id="UP000001865">
    <property type="component" value="Chromosome"/>
</dbReference>
<dbReference type="GO" id="GO:0005886">
    <property type="term" value="C:plasma membrane"/>
    <property type="evidence" value="ECO:0007669"/>
    <property type="project" value="UniProtKB-SubCell"/>
</dbReference>
<dbReference type="GO" id="GO:0044667">
    <property type="term" value="F:(R)-carnitine:4-(trimethylammonio)butanoate antiporter activity"/>
    <property type="evidence" value="ECO:0007669"/>
    <property type="project" value="UniProtKB-UniRule"/>
</dbReference>
<dbReference type="GO" id="GO:1900751">
    <property type="term" value="P:4-(trimethylammonio)butanoate transport"/>
    <property type="evidence" value="ECO:0007669"/>
    <property type="project" value="InterPro"/>
</dbReference>
<dbReference type="GO" id="GO:0009437">
    <property type="term" value="P:carnitine metabolic process"/>
    <property type="evidence" value="ECO:0007669"/>
    <property type="project" value="UniProtKB-UniRule"/>
</dbReference>
<dbReference type="HAMAP" id="MF_01049">
    <property type="entry name" value="CaiT"/>
    <property type="match status" value="1"/>
</dbReference>
<dbReference type="InterPro" id="IPR018093">
    <property type="entry name" value="BCCT_CS"/>
</dbReference>
<dbReference type="InterPro" id="IPR000060">
    <property type="entry name" value="BCCT_transptr"/>
</dbReference>
<dbReference type="InterPro" id="IPR023449">
    <property type="entry name" value="BCCT_transptr_CaiT"/>
</dbReference>
<dbReference type="NCBIfam" id="TIGR00842">
    <property type="entry name" value="bcct"/>
    <property type="match status" value="1"/>
</dbReference>
<dbReference type="NCBIfam" id="NF002887">
    <property type="entry name" value="PRK03356.1"/>
    <property type="match status" value="1"/>
</dbReference>
<dbReference type="PANTHER" id="PTHR30047">
    <property type="entry name" value="HIGH-AFFINITY CHOLINE TRANSPORT PROTEIN-RELATED"/>
    <property type="match status" value="1"/>
</dbReference>
<dbReference type="PANTHER" id="PTHR30047:SF11">
    <property type="entry name" value="L-CARNITINE_GAMMA-BUTYROBETAINE ANTIPORTER"/>
    <property type="match status" value="1"/>
</dbReference>
<dbReference type="Pfam" id="PF02028">
    <property type="entry name" value="BCCT"/>
    <property type="match status" value="1"/>
</dbReference>
<dbReference type="PROSITE" id="PS01303">
    <property type="entry name" value="BCCT"/>
    <property type="match status" value="1"/>
</dbReference>
<name>CAIT_SALSV</name>
<sequence length="505" mass="56643">MKNEKKKSGIEPKVFFPPLIIVGILCWLTVRDLDAANVVINAVFSYVTNVWGWAFEWYMVVMLFGWFWLVFGPYAKKRLGDEKPEFSTASWIFMMFASCTSAAVLFWGSIEIYYYISTPPFGLEPNSTGAKEIGLAYSLFHWGPLPWATYSFLSVAFAYFFFVRKMDVIRPSSTLVPLVGEKHAKGLFGTIVDNFYLVALIFAMGTSLGLATPLVTECMQWLFGIPHTLQLDAIIITCWIILNAICVACGLQKGVRIASDVRSYLSFLMLGWVFIVSGASFIMNYFTDSVGMLLMHLPRMLFYTDAIGKGGFPQGWTVFYWAWWVIYAIQMSIFLARISRGRTVRELCFGMVMGLTASTWILWTVLGSNTLLLMDKNILNIPQLIEQHGVARAIIETWAALPLSTATMWGFFILCFIATVTLINACSYTLAMSTCREVRDGEEPPLLVRIGWSVLVGIIGIVLLALGGLKPIQTAIIAGGCPLFFVNIMVTLSFIKDAKVHWKDK</sequence>
<gene>
    <name evidence="1" type="primary">caiT</name>
    <name type="ordered locus">SeSA_A0082</name>
</gene>
<proteinExistence type="inferred from homology"/>
<reference key="1">
    <citation type="journal article" date="2011" name="J. Bacteriol.">
        <title>Comparative genomics of 28 Salmonella enterica isolates: evidence for CRISPR-mediated adaptive sublineage evolution.</title>
        <authorList>
            <person name="Fricke W.F."/>
            <person name="Mammel M.K."/>
            <person name="McDermott P.F."/>
            <person name="Tartera C."/>
            <person name="White D.G."/>
            <person name="Leclerc J.E."/>
            <person name="Ravel J."/>
            <person name="Cebula T.A."/>
        </authorList>
    </citation>
    <scope>NUCLEOTIDE SEQUENCE [LARGE SCALE GENOMIC DNA]</scope>
    <source>
        <strain>CVM19633</strain>
    </source>
</reference>
<comment type="function">
    <text evidence="1">Catalyzes the exchange of L-carnitine for gamma-butyrobetaine.</text>
</comment>
<comment type="catalytic activity">
    <reaction evidence="1">
        <text>4-(trimethylamino)butanoate(in) + (R)-carnitine(out) = 4-(trimethylamino)butanoate(out) + (R)-carnitine(in)</text>
        <dbReference type="Rhea" id="RHEA:29427"/>
        <dbReference type="ChEBI" id="CHEBI:16244"/>
        <dbReference type="ChEBI" id="CHEBI:16347"/>
    </reaction>
</comment>
<comment type="pathway">
    <text evidence="1">Amine and polyamine metabolism; carnitine metabolism.</text>
</comment>
<comment type="subunit">
    <text evidence="1">Homotrimer.</text>
</comment>
<comment type="subcellular location">
    <subcellularLocation>
        <location evidence="1">Cell inner membrane</location>
        <topology evidence="1">Multi-pass membrane protein</topology>
    </subcellularLocation>
</comment>
<comment type="similarity">
    <text evidence="1">Belongs to the BCCT transporter (TC 2.A.15) family. CaiT subfamily.</text>
</comment>
<organism>
    <name type="scientific">Salmonella schwarzengrund (strain CVM19633)</name>
    <dbReference type="NCBI Taxonomy" id="439843"/>
    <lineage>
        <taxon>Bacteria</taxon>
        <taxon>Pseudomonadati</taxon>
        <taxon>Pseudomonadota</taxon>
        <taxon>Gammaproteobacteria</taxon>
        <taxon>Enterobacterales</taxon>
        <taxon>Enterobacteriaceae</taxon>
        <taxon>Salmonella</taxon>
    </lineage>
</organism>
<feature type="chain" id="PRO_1000136244" description="L-carnitine/gamma-butyrobetaine antiporter">
    <location>
        <begin position="1"/>
        <end position="505"/>
    </location>
</feature>
<feature type="transmembrane region" description="Helical" evidence="1">
    <location>
        <begin position="10"/>
        <end position="30"/>
    </location>
</feature>
<feature type="transmembrane region" description="Helical" evidence="1">
    <location>
        <begin position="51"/>
        <end position="71"/>
    </location>
</feature>
<feature type="transmembrane region" description="Helical" evidence="1">
    <location>
        <begin position="92"/>
        <end position="112"/>
    </location>
</feature>
<feature type="transmembrane region" description="Helical" evidence="1">
    <location>
        <begin position="143"/>
        <end position="163"/>
    </location>
</feature>
<feature type="transmembrane region" description="Helical" evidence="1">
    <location>
        <begin position="195"/>
        <end position="215"/>
    </location>
</feature>
<feature type="transmembrane region" description="Helical" evidence="1">
    <location>
        <begin position="231"/>
        <end position="251"/>
    </location>
</feature>
<feature type="transmembrane region" description="Helical" evidence="1">
    <location>
        <begin position="263"/>
        <end position="283"/>
    </location>
</feature>
<feature type="transmembrane region" description="Helical" evidence="1">
    <location>
        <begin position="316"/>
        <end position="336"/>
    </location>
</feature>
<feature type="transmembrane region" description="Helical" evidence="1">
    <location>
        <begin position="347"/>
        <end position="367"/>
    </location>
</feature>
<feature type="transmembrane region" description="Helical" evidence="1">
    <location>
        <begin position="403"/>
        <end position="423"/>
    </location>
</feature>
<feature type="transmembrane region" description="Helical" evidence="1">
    <location>
        <begin position="446"/>
        <end position="466"/>
    </location>
</feature>
<feature type="transmembrane region" description="Helical" evidence="1">
    <location>
        <begin position="475"/>
        <end position="495"/>
    </location>
</feature>
<evidence type="ECO:0000255" key="1">
    <source>
        <dbReference type="HAMAP-Rule" id="MF_01049"/>
    </source>
</evidence>
<keyword id="KW-0050">Antiport</keyword>
<keyword id="KW-0997">Cell inner membrane</keyword>
<keyword id="KW-1003">Cell membrane</keyword>
<keyword id="KW-0472">Membrane</keyword>
<keyword id="KW-0812">Transmembrane</keyword>
<keyword id="KW-1133">Transmembrane helix</keyword>
<keyword id="KW-0813">Transport</keyword>
<protein>
    <recommendedName>
        <fullName evidence="1">L-carnitine/gamma-butyrobetaine antiporter</fullName>
    </recommendedName>
</protein>
<accession>B4TWR7</accession>